<keyword id="KW-0002">3D-structure</keyword>
<keyword id="KW-0007">Acetylation</keyword>
<keyword id="KW-0010">Activator</keyword>
<keyword id="KW-0025">Alternative splicing</keyword>
<keyword id="KW-0539">Nucleus</keyword>
<keyword id="KW-0597">Phosphoprotein</keyword>
<keyword id="KW-1267">Proteomics identification</keyword>
<keyword id="KW-1185">Reference proteome</keyword>
<keyword id="KW-0804">Transcription</keyword>
<keyword id="KW-0805">Transcription regulation</keyword>
<keyword id="KW-0879">Wnt signaling pathway</keyword>
<comment type="function">
    <text evidence="4 5 7 8 9">Component of the PAF1 complex (PAF1C) which has multiple functions during transcription by RNA polymerase II and is implicated in regulation of development and maintenance of embryonic stem cell pluripotency. PAF1C associates with RNA polymerase II through interaction with POLR2A CTD non-phosphorylated and 'Ser-2'- and 'Ser-5'-phosphorylated forms and is involved in transcriptional elongation, acting both independently and synergistically with TCEA1 and in cooperation with the DSIF complex and HTATSF1. PAF1C is required for transcription of Hox and Wnt target genes. PAF1C is involved in hematopoiesis and stimulates transcriptional activity of KMT2A/MLL1; it promotes leukemogenesis through association with KMT2A/MLL1-rearranged oncoproteins, such as KMT2A/MLL1-MLLT3/AF9 and KMT2A/MLL1-MLLT1/ENL. PAF1C is involved in histone modifications such as ubiquitination of histone H2B and methylation on histone H3 'Lys-4' (H3K4me3). PAF1C recruits the RNF20/40 E3 ubiquitin-protein ligase complex and the E2 enzyme UBE2A or UBE2B to chromatin which mediate monoubiquitination of 'Lys-120' of histone H2B (H2BK120ub1); UB2A/B-mediated H2B ubiquitination is proposed to be coupled to transcription. PAF1C is involved in mRNA 3' end formation probably through association with cleavage and poly(A) factors. In case of infection by influenza A strain H3N2, PAF1C associates with viral NS1 protein, thereby regulating gene transcription. Involved in polyadenylation of mRNA precursors. Connects PAF1C to Wnt signaling.</text>
</comment>
<comment type="subunit">
    <text evidence="1 4 6 8 9">Component of the PAF1 complex, which consists of CDC73, PAF1, LEO1, CTR9, RTF1 and SKIC8 (PubMed:15632063, PubMed:19952111, PubMed:20178742). The PAF1 complex interacts with PHF5A (By similarity). Interacts with TCEA1, SUPT5H and CTNNB1 (PubMed:16630820, PubMed:19952111, PubMed:20178742). Interacts with SETD5 (By similarity).</text>
</comment>
<comment type="subunit">
    <text evidence="10">(Microbial infection) The PAF1 complex interacts with Zika virus French Polynesia 10087PF/2013 non-structural protein 5/NS5 (PubMed:30550790). The interaction with viral NS5 proteins may reduce the antiviral immune response by inhibiting the recruitment of the PAF1 complex to interferon-stimulated genes, thus preventing their transcription (PubMed:30550790).</text>
</comment>
<comment type="subunit">
    <text evidence="10">(Microbial infection) The PAF1 complex interacts with Dengue virus DENV2 16681 non-structural protein 5/NS5 (PubMed:30550790). The PAF1 complex interacts with Dengue virus DENV4 Dominica/814669/1981 non-structural protein 5/NS5 (PubMed:30550790). The interaction with viral NS5 proteins may reduce the antiviral immune response by inhibiting the recruitment of the PAF1 complex to interferon-stimulated genes, thus preventing their transcription (PubMed:30550790).</text>
</comment>
<comment type="interaction">
    <interactant intactId="EBI-932432">
        <id>Q8WVC0</id>
    </interactant>
    <interactant intactId="EBI-930143">
        <id>Q6P1J9</id>
        <label>CDC73</label>
    </interactant>
    <organismsDiffer>false</organismsDiffer>
    <experiments>19</experiments>
</comment>
<comment type="interaction">
    <interactant intactId="EBI-932432">
        <id>Q8WVC0</id>
    </interactant>
    <interactant intactId="EBI-491549">
        <id>P35222</id>
        <label>CTNNB1</label>
    </interactant>
    <organismsDiffer>false</organismsDiffer>
    <experiments>2</experiments>
</comment>
<comment type="interaction">
    <interactant intactId="EBI-932432">
        <id>Q8WVC0</id>
    </interactant>
    <interactant intactId="EBI-11519926">
        <id>Q6PI77</id>
        <label>GPRASP3</label>
    </interactant>
    <organismsDiffer>false</organismsDiffer>
    <experiments>3</experiments>
</comment>
<comment type="interaction">
    <interactant intactId="EBI-932432">
        <id>Q8WVC0</id>
    </interactant>
    <interactant intactId="EBI-2607770">
        <id>Q8N7H5</id>
        <label>PAF1</label>
    </interactant>
    <organismsDiffer>false</organismsDiffer>
    <experiments>30</experiments>
</comment>
<comment type="interaction">
    <interactant intactId="EBI-932432">
        <id>Q8WVC0</id>
    </interactant>
    <interactant intactId="EBI-2608271">
        <id>P23193</id>
        <label>TCEA1</label>
    </interactant>
    <organismsDiffer>false</organismsDiffer>
    <experiments>4</experiments>
</comment>
<comment type="interaction">
    <interactant intactId="EBI-932432">
        <id>Q8WVC0</id>
    </interactant>
    <interactant intactId="EBI-3913577">
        <id>O75764</id>
        <label>TCEA3</label>
    </interactant>
    <organismsDiffer>false</organismsDiffer>
    <experiments>3</experiments>
</comment>
<comment type="subcellular location">
    <subcellularLocation>
        <location evidence="5">Nucleus</location>
    </subcellularLocation>
</comment>
<comment type="alternative products">
    <event type="alternative splicing"/>
    <isoform>
        <id>Q8WVC0-1</id>
        <name>1</name>
        <sequence type="displayed"/>
    </isoform>
    <isoform>
        <id>Q8WVC0-2</id>
        <name>2</name>
        <sequence type="described" ref="VSP_020051"/>
    </isoform>
</comment>
<comment type="tissue specificity">
    <text evidence="5">Highly expressed in skeletal muscle and heart. Weakly expressed in placenta and liver.</text>
</comment>
<comment type="similarity">
    <text evidence="12">Belongs to the LEO1 family.</text>
</comment>
<comment type="sequence caution" evidence="12">
    <conflict type="frameshift">
        <sequence resource="EMBL-CDS" id="BAB71006"/>
    </conflict>
</comment>
<comment type="sequence caution" evidence="12">
    <molecule>Isoform 2</molecule>
    <conflict type="frameshift">
        <sequence resource="EMBL-CDS" id="BAB71006"/>
    </conflict>
</comment>
<name>LEO1_HUMAN</name>
<accession>Q8WVC0</accession>
<accession>Q96N99</accession>
<feature type="initiator methionine" description="Removed" evidence="18 19 20">
    <location>
        <position position="1"/>
    </location>
</feature>
<feature type="chain" id="PRO_0000247819" description="RNA polymerase-associated protein LEO1">
    <location>
        <begin position="2"/>
        <end position="666"/>
    </location>
</feature>
<feature type="region of interest" description="Disordered" evidence="3">
    <location>
        <begin position="1"/>
        <end position="357"/>
    </location>
</feature>
<feature type="region of interest" description="Disordered" evidence="3">
    <location>
        <begin position="547"/>
        <end position="583"/>
    </location>
</feature>
<feature type="region of interest" description="Disordered" evidence="3">
    <location>
        <begin position="602"/>
        <end position="666"/>
    </location>
</feature>
<feature type="compositionally biased region" description="Acidic residues" evidence="3">
    <location>
        <begin position="1"/>
        <end position="14"/>
    </location>
</feature>
<feature type="compositionally biased region" description="Low complexity" evidence="3">
    <location>
        <begin position="32"/>
        <end position="44"/>
    </location>
</feature>
<feature type="compositionally biased region" description="Basic and acidic residues" evidence="3">
    <location>
        <begin position="70"/>
        <end position="96"/>
    </location>
</feature>
<feature type="compositionally biased region" description="Basic and acidic residues" evidence="3">
    <location>
        <begin position="119"/>
        <end position="178"/>
    </location>
</feature>
<feature type="compositionally biased region" description="Acidic residues" evidence="3">
    <location>
        <begin position="179"/>
        <end position="192"/>
    </location>
</feature>
<feature type="compositionally biased region" description="Basic and acidic residues" evidence="3">
    <location>
        <begin position="193"/>
        <end position="218"/>
    </location>
</feature>
<feature type="compositionally biased region" description="Basic and acidic residues" evidence="3">
    <location>
        <begin position="239"/>
        <end position="285"/>
    </location>
</feature>
<feature type="compositionally biased region" description="Low complexity" evidence="3">
    <location>
        <begin position="316"/>
        <end position="325"/>
    </location>
</feature>
<feature type="compositionally biased region" description="Basic and acidic residues" evidence="3">
    <location>
        <begin position="547"/>
        <end position="561"/>
    </location>
</feature>
<feature type="compositionally biased region" description="Acidic residues" evidence="3">
    <location>
        <begin position="574"/>
        <end position="583"/>
    </location>
</feature>
<feature type="compositionally biased region" description="Basic and acidic residues" evidence="3">
    <location>
        <begin position="636"/>
        <end position="648"/>
    </location>
</feature>
<feature type="modified residue" description="N-acetylalanine" evidence="18 19 20">
    <location>
        <position position="2"/>
    </location>
</feature>
<feature type="modified residue" description="Phosphoserine" evidence="14 18">
    <location>
        <position position="10"/>
    </location>
</feature>
<feature type="modified residue" description="Phosphoserine" evidence="14 18 19">
    <location>
        <position position="14"/>
    </location>
</feature>
<feature type="modified residue" description="Phosphoserine" evidence="21">
    <location>
        <position position="66"/>
    </location>
</feature>
<feature type="modified residue" description="Phosphoserine" evidence="14 18 19">
    <location>
        <position position="151"/>
    </location>
</feature>
<feature type="modified residue" description="Phosphoserine" evidence="14 18 19">
    <location>
        <position position="154"/>
    </location>
</feature>
<feature type="modified residue" description="Phosphoserine" evidence="18 19">
    <location>
        <position position="162"/>
    </location>
</feature>
<feature type="modified residue" description="Phosphoserine" evidence="18 19">
    <location>
        <position position="171"/>
    </location>
</feature>
<feature type="modified residue" description="Phosphoserine" evidence="18 19">
    <location>
        <position position="179"/>
    </location>
</feature>
<feature type="modified residue" description="Phosphothreonine" evidence="14 18 19 21">
    <location>
        <position position="188"/>
    </location>
</feature>
<feature type="modified residue" description="Phosphoserine" evidence="14 18 19 21">
    <location>
        <position position="197"/>
    </location>
</feature>
<feature type="modified residue" description="Phosphoserine" evidence="14">
    <location>
        <position position="205"/>
    </location>
</feature>
<feature type="modified residue" description="Phosphoserine" evidence="14 18 19">
    <location>
        <position position="212"/>
    </location>
</feature>
<feature type="modified residue" description="Phosphoserine" evidence="14 18 19">
    <location>
        <position position="220"/>
    </location>
</feature>
<feature type="modified residue" description="Phosphoserine" evidence="14 18">
    <location>
        <position position="229"/>
    </location>
</feature>
<feature type="modified residue" description="Phosphoserine" evidence="14 18">
    <location>
        <position position="238"/>
    </location>
</feature>
<feature type="modified residue" description="Phosphoserine" evidence="2">
    <location>
        <position position="246"/>
    </location>
</feature>
<feature type="modified residue" description="Phosphoserine" evidence="2">
    <location>
        <position position="254"/>
    </location>
</feature>
<feature type="modified residue" description="Phosphoserine" evidence="22">
    <location>
        <position position="277"/>
    </location>
</feature>
<feature type="modified residue" description="Phosphoserine" evidence="13 18 19 21 22">
    <location>
        <position position="279"/>
    </location>
</feature>
<feature type="modified residue" description="Phosphoserine" evidence="16 19 22">
    <location>
        <position position="294"/>
    </location>
</feature>
<feature type="modified residue" description="Phosphoserine" evidence="16 22">
    <location>
        <position position="296"/>
    </location>
</feature>
<feature type="modified residue" description="Phosphoserine" evidence="18 19 22">
    <location>
        <position position="300"/>
    </location>
</feature>
<feature type="modified residue" description="Phosphotyrosine" evidence="22">
    <location>
        <position position="606"/>
    </location>
</feature>
<feature type="modified residue" description="Phosphoserine" evidence="16 19">
    <location>
        <position position="607"/>
    </location>
</feature>
<feature type="modified residue" description="Phosphoserine" evidence="16 19">
    <location>
        <position position="608"/>
    </location>
</feature>
<feature type="modified residue" description="Phosphoserine" evidence="16 19 22">
    <location>
        <position position="610"/>
    </location>
</feature>
<feature type="modified residue" description="Phosphoserine" evidence="16">
    <location>
        <position position="614"/>
    </location>
</feature>
<feature type="modified residue" description="Phosphothreonine" evidence="16 17">
    <location>
        <position position="629"/>
    </location>
</feature>
<feature type="modified residue" description="Phosphoserine" evidence="13 16 17 18 19 21 22">
    <location>
        <position position="630"/>
    </location>
</feature>
<feature type="modified residue" description="Phosphoserine" evidence="13 14 15 16 17 18 19 21 22">
    <location>
        <position position="658"/>
    </location>
</feature>
<feature type="splice variant" id="VSP_020051" description="In isoform 2." evidence="11">
    <location>
        <begin position="387"/>
        <end position="446"/>
    </location>
</feature>
<feature type="strand" evidence="23">
    <location>
        <begin position="372"/>
        <end position="377"/>
    </location>
</feature>
<feature type="helix" evidence="24">
    <location>
        <begin position="380"/>
        <end position="382"/>
    </location>
</feature>
<feature type="helix" evidence="23">
    <location>
        <begin position="391"/>
        <end position="393"/>
    </location>
</feature>
<feature type="helix" evidence="23">
    <location>
        <begin position="409"/>
        <end position="416"/>
    </location>
</feature>
<feature type="strand" evidence="23">
    <location>
        <begin position="418"/>
        <end position="420"/>
    </location>
</feature>
<feature type="strand" evidence="23">
    <location>
        <begin position="422"/>
        <end position="426"/>
    </location>
</feature>
<feature type="strand" evidence="23">
    <location>
        <begin position="432"/>
        <end position="443"/>
    </location>
</feature>
<feature type="strand" evidence="23">
    <location>
        <begin position="448"/>
        <end position="452"/>
    </location>
</feature>
<feature type="strand" evidence="23">
    <location>
        <begin position="455"/>
        <end position="459"/>
    </location>
</feature>
<feature type="strand" evidence="24">
    <location>
        <begin position="461"/>
        <end position="463"/>
    </location>
</feature>
<feature type="strand" evidence="24">
    <location>
        <begin position="472"/>
        <end position="480"/>
    </location>
</feature>
<feature type="strand" evidence="24">
    <location>
        <begin position="482"/>
        <end position="485"/>
    </location>
</feature>
<feature type="strand" evidence="24">
    <location>
        <begin position="491"/>
        <end position="494"/>
    </location>
</feature>
<sequence>MADMEDLFGSDADSEAERKDSDSGSDSDSDQENAASGSNASGSESDQDERGDSGQPSNKELFGDDSEDEGASHHSGSDNHSERSDNRSEASERSDHEDNDPSDVDQHSGSEAPNDDEDEGHRSDGGSHHSEAEGSEKAHSDDEKWGREDKSDQSDDEKIQNSDDEERAQGSDEDKLQNSDDDEKMQNTDDEERPQLSDDERQQLSEEEKANSDDERPVASDNDDEKQNSDDEEQPQLSDEEKMQNSDDERPQASDEEHRHSDDEEEQDHKSESARGSDSEDEVLRMKRKNAIASDSEADSDTEVPKDNSGTMDLFGGADDISSGSDGEDKPPTPGQPVDENGLPQDQQEEEPIPETRIEVEIPKVNTDLGNDLYFVKLPNFLSVEPRPFDPQYYEDEFEDEEMLDEEGRTRLKLKVENTIRWRIRRDEEGNEIKESNARIVKWSDGSMSLHLGNEVFDVYKAPLQGDHNHLFIRQGTGLQGQAVFKTKLTFRPHSTDSATHRKMTLSLADRCSKTQKIRILPMAGRDPECQRTEMIKKEEERLRASIRRESQQRRMREKQHQRGLSASYLEPDRYDEEEEGEESISLAAIKNRYKGGIREERARIYSSDSDEGSEEDKAQRLLKAKKLTSDEEGEPSGKRKAEDDDKANKKHKKYVISDEEEEDDD</sequence>
<proteinExistence type="evidence at protein level"/>
<evidence type="ECO:0000250" key="1">
    <source>
        <dbReference type="UniProtKB" id="Q5XJE5"/>
    </source>
</evidence>
<evidence type="ECO:0000250" key="2">
    <source>
        <dbReference type="UniProtKB" id="Q641X2"/>
    </source>
</evidence>
<evidence type="ECO:0000256" key="3">
    <source>
        <dbReference type="SAM" id="MobiDB-lite"/>
    </source>
</evidence>
<evidence type="ECO:0000269" key="4">
    <source>
    </source>
</evidence>
<evidence type="ECO:0000269" key="5">
    <source>
    </source>
</evidence>
<evidence type="ECO:0000269" key="6">
    <source>
    </source>
</evidence>
<evidence type="ECO:0000269" key="7">
    <source>
    </source>
</evidence>
<evidence type="ECO:0000269" key="8">
    <source>
    </source>
</evidence>
<evidence type="ECO:0000269" key="9">
    <source>
    </source>
</evidence>
<evidence type="ECO:0000269" key="10">
    <source>
    </source>
</evidence>
<evidence type="ECO:0000303" key="11">
    <source>
    </source>
</evidence>
<evidence type="ECO:0000305" key="12"/>
<evidence type="ECO:0007744" key="13">
    <source>
    </source>
</evidence>
<evidence type="ECO:0007744" key="14">
    <source>
    </source>
</evidence>
<evidence type="ECO:0007744" key="15">
    <source>
    </source>
</evidence>
<evidence type="ECO:0007744" key="16">
    <source>
    </source>
</evidence>
<evidence type="ECO:0007744" key="17">
    <source>
    </source>
</evidence>
<evidence type="ECO:0007744" key="18">
    <source>
    </source>
</evidence>
<evidence type="ECO:0007744" key="19">
    <source>
    </source>
</evidence>
<evidence type="ECO:0007744" key="20">
    <source>
    </source>
</evidence>
<evidence type="ECO:0007744" key="21">
    <source>
    </source>
</evidence>
<evidence type="ECO:0007744" key="22">
    <source>
    </source>
</evidence>
<evidence type="ECO:0007829" key="23">
    <source>
        <dbReference type="PDB" id="4M6T"/>
    </source>
</evidence>
<evidence type="ECO:0007829" key="24">
    <source>
        <dbReference type="PDB" id="7OOP"/>
    </source>
</evidence>
<protein>
    <recommendedName>
        <fullName>RNA polymerase-associated protein LEO1</fullName>
    </recommendedName>
    <alternativeName>
        <fullName>Replicative senescence down-regulated leo1-like protein</fullName>
    </alternativeName>
</protein>
<reference key="1">
    <citation type="journal article" date="2005" name="FASEB J.">
        <title>Expression of the Leo1-like domain of replicative senescence down-regulated Leo1-like (RDL) protein promotes senescence of 2BS fibroblasts.</title>
        <authorList>
            <person name="Zhao L."/>
            <person name="Tong T."/>
            <person name="Zhang Z."/>
        </authorList>
    </citation>
    <scope>NUCLEOTIDE SEQUENCE [MRNA] (ISOFORM 1)</scope>
    <scope>FUNCTION</scope>
    <scope>SUBCELLULAR LOCATION</scope>
    <scope>TISSUE SPECIFICITY</scope>
</reference>
<reference key="2">
    <citation type="journal article" date="2004" name="Nat. Genet.">
        <title>Complete sequencing and characterization of 21,243 full-length human cDNAs.</title>
        <authorList>
            <person name="Ota T."/>
            <person name="Suzuki Y."/>
            <person name="Nishikawa T."/>
            <person name="Otsuki T."/>
            <person name="Sugiyama T."/>
            <person name="Irie R."/>
            <person name="Wakamatsu A."/>
            <person name="Hayashi K."/>
            <person name="Sato H."/>
            <person name="Nagai K."/>
            <person name="Kimura K."/>
            <person name="Makita H."/>
            <person name="Sekine M."/>
            <person name="Obayashi M."/>
            <person name="Nishi T."/>
            <person name="Shibahara T."/>
            <person name="Tanaka T."/>
            <person name="Ishii S."/>
            <person name="Yamamoto J."/>
            <person name="Saito K."/>
            <person name="Kawai Y."/>
            <person name="Isono Y."/>
            <person name="Nakamura Y."/>
            <person name="Nagahari K."/>
            <person name="Murakami K."/>
            <person name="Yasuda T."/>
            <person name="Iwayanagi T."/>
            <person name="Wagatsuma M."/>
            <person name="Shiratori A."/>
            <person name="Sudo H."/>
            <person name="Hosoiri T."/>
            <person name="Kaku Y."/>
            <person name="Kodaira H."/>
            <person name="Kondo H."/>
            <person name="Sugawara M."/>
            <person name="Takahashi M."/>
            <person name="Kanda K."/>
            <person name="Yokoi T."/>
            <person name="Furuya T."/>
            <person name="Kikkawa E."/>
            <person name="Omura Y."/>
            <person name="Abe K."/>
            <person name="Kamihara K."/>
            <person name="Katsuta N."/>
            <person name="Sato K."/>
            <person name="Tanikawa M."/>
            <person name="Yamazaki M."/>
            <person name="Ninomiya K."/>
            <person name="Ishibashi T."/>
            <person name="Yamashita H."/>
            <person name="Murakawa K."/>
            <person name="Fujimori K."/>
            <person name="Tanai H."/>
            <person name="Kimata M."/>
            <person name="Watanabe M."/>
            <person name="Hiraoka S."/>
            <person name="Chiba Y."/>
            <person name="Ishida S."/>
            <person name="Ono Y."/>
            <person name="Takiguchi S."/>
            <person name="Watanabe S."/>
            <person name="Yosida M."/>
            <person name="Hotuta T."/>
            <person name="Kusano J."/>
            <person name="Kanehori K."/>
            <person name="Takahashi-Fujii A."/>
            <person name="Hara H."/>
            <person name="Tanase T.-O."/>
            <person name="Nomura Y."/>
            <person name="Togiya S."/>
            <person name="Komai F."/>
            <person name="Hara R."/>
            <person name="Takeuchi K."/>
            <person name="Arita M."/>
            <person name="Imose N."/>
            <person name="Musashino K."/>
            <person name="Yuuki H."/>
            <person name="Oshima A."/>
            <person name="Sasaki N."/>
            <person name="Aotsuka S."/>
            <person name="Yoshikawa Y."/>
            <person name="Matsunawa H."/>
            <person name="Ichihara T."/>
            <person name="Shiohata N."/>
            <person name="Sano S."/>
            <person name="Moriya S."/>
            <person name="Momiyama H."/>
            <person name="Satoh N."/>
            <person name="Takami S."/>
            <person name="Terashima Y."/>
            <person name="Suzuki O."/>
            <person name="Nakagawa S."/>
            <person name="Senoh A."/>
            <person name="Mizoguchi H."/>
            <person name="Goto Y."/>
            <person name="Shimizu F."/>
            <person name="Wakebe H."/>
            <person name="Hishigaki H."/>
            <person name="Watanabe T."/>
            <person name="Sugiyama A."/>
            <person name="Takemoto M."/>
            <person name="Kawakami B."/>
            <person name="Yamazaki M."/>
            <person name="Watanabe K."/>
            <person name="Kumagai A."/>
            <person name="Itakura S."/>
            <person name="Fukuzumi Y."/>
            <person name="Fujimori Y."/>
            <person name="Komiyama M."/>
            <person name="Tashiro H."/>
            <person name="Tanigami A."/>
            <person name="Fujiwara T."/>
            <person name="Ono T."/>
            <person name="Yamada K."/>
            <person name="Fujii Y."/>
            <person name="Ozaki K."/>
            <person name="Hirao M."/>
            <person name="Ohmori Y."/>
            <person name="Kawabata A."/>
            <person name="Hikiji T."/>
            <person name="Kobatake N."/>
            <person name="Inagaki H."/>
            <person name="Ikema Y."/>
            <person name="Okamoto S."/>
            <person name="Okitani R."/>
            <person name="Kawakami T."/>
            <person name="Noguchi S."/>
            <person name="Itoh T."/>
            <person name="Shigeta K."/>
            <person name="Senba T."/>
            <person name="Matsumura K."/>
            <person name="Nakajima Y."/>
            <person name="Mizuno T."/>
            <person name="Morinaga M."/>
            <person name="Sasaki M."/>
            <person name="Togashi T."/>
            <person name="Oyama M."/>
            <person name="Hata H."/>
            <person name="Watanabe M."/>
            <person name="Komatsu T."/>
            <person name="Mizushima-Sugano J."/>
            <person name="Satoh T."/>
            <person name="Shirai Y."/>
            <person name="Takahashi Y."/>
            <person name="Nakagawa K."/>
            <person name="Okumura K."/>
            <person name="Nagase T."/>
            <person name="Nomura N."/>
            <person name="Kikuchi H."/>
            <person name="Masuho Y."/>
            <person name="Yamashita R."/>
            <person name="Nakai K."/>
            <person name="Yada T."/>
            <person name="Nakamura Y."/>
            <person name="Ohara O."/>
            <person name="Isogai T."/>
            <person name="Sugano S."/>
        </authorList>
    </citation>
    <scope>NUCLEOTIDE SEQUENCE [LARGE SCALE MRNA] (ISOFORM 2)</scope>
    <source>
        <tissue>Kidney</tissue>
    </source>
</reference>
<reference key="3">
    <citation type="journal article" date="2004" name="Genome Res.">
        <title>The status, quality, and expansion of the NIH full-length cDNA project: the Mammalian Gene Collection (MGC).</title>
        <authorList>
            <consortium name="The MGC Project Team"/>
        </authorList>
    </citation>
    <scope>NUCLEOTIDE SEQUENCE [LARGE SCALE MRNA] (ISOFORM 1)</scope>
    <source>
        <tissue>Colon</tissue>
    </source>
</reference>
<reference key="4">
    <citation type="journal article" date="2005" name="Mol. Cell. Biol.">
        <title>The parafibromin tumor suppressor protein is part of a human Paf1 complex.</title>
        <authorList>
            <person name="Rozenblatt-Rosen O."/>
            <person name="Hughes C.M."/>
            <person name="Nannepaga S.J."/>
            <person name="Shanmugam K.S."/>
            <person name="Copeland T.D."/>
            <person name="Guszczynski T."/>
            <person name="Resau J.H."/>
            <person name="Meyerson M."/>
        </authorList>
    </citation>
    <scope>COMPONENT OF PAF1 COMPLEX</scope>
    <scope>FUNCTION</scope>
    <scope>INTERACTION WITH CDC73</scope>
</reference>
<reference key="5">
    <citation type="journal article" date="2006" name="Cell">
        <title>Parafibromin/Hyrax activates Wnt/Wg target gene transcription by direct association with beta-catenin/Armadillo.</title>
        <authorList>
            <person name="Mosimann C."/>
            <person name="Hausmann G."/>
            <person name="Basler K."/>
        </authorList>
    </citation>
    <scope>INTERACTION WITH CTNNB1</scope>
</reference>
<reference key="6">
    <citation type="journal article" date="2006" name="Cell">
        <title>Global, in vivo, and site-specific phosphorylation dynamics in signaling networks.</title>
        <authorList>
            <person name="Olsen J.V."/>
            <person name="Blagoev B."/>
            <person name="Gnad F."/>
            <person name="Macek B."/>
            <person name="Kumar C."/>
            <person name="Mortensen P."/>
            <person name="Mann M."/>
        </authorList>
    </citation>
    <scope>PHOSPHORYLATION [LARGE SCALE ANALYSIS] AT SER-10; SER-14; SER-151; SER-154; THR-188; SER-197; SER-205; SER-212; SER-220; SER-229; SER-238 AND SER-658</scope>
    <scope>IDENTIFICATION BY MASS SPECTROMETRY [LARGE SCALE ANALYSIS]</scope>
    <source>
        <tissue>Cervix carcinoma</tissue>
    </source>
</reference>
<reference key="7">
    <citation type="journal article" date="2006" name="Nat. Biotechnol.">
        <title>A probability-based approach for high-throughput protein phosphorylation analysis and site localization.</title>
        <authorList>
            <person name="Beausoleil S.A."/>
            <person name="Villen J."/>
            <person name="Gerber S.A."/>
            <person name="Rush J."/>
            <person name="Gygi S.P."/>
        </authorList>
    </citation>
    <scope>PHOSPHORYLATION [LARGE SCALE ANALYSIS] AT SER-279; SER-630 AND SER-658</scope>
    <scope>IDENTIFICATION BY MASS SPECTROMETRY [LARGE SCALE ANALYSIS]</scope>
    <source>
        <tissue>Cervix carcinoma</tissue>
    </source>
</reference>
<reference key="8">
    <citation type="journal article" date="2008" name="Proc. Natl. Acad. Sci. U.S.A.">
        <title>A quantitative atlas of mitotic phosphorylation.</title>
        <authorList>
            <person name="Dephoure N."/>
            <person name="Zhou C."/>
            <person name="Villen J."/>
            <person name="Beausoleil S.A."/>
            <person name="Bakalarski C.E."/>
            <person name="Elledge S.J."/>
            <person name="Gygi S.P."/>
        </authorList>
    </citation>
    <scope>PHOSPHORYLATION [LARGE SCALE ANALYSIS] AT SER-294; SER-296; SER-607; SER-608; SER-610; SER-614; THR-629; SER-630 AND SER-658</scope>
    <scope>IDENTIFICATION BY MASS SPECTROMETRY [LARGE SCALE ANALYSIS]</scope>
    <source>
        <tissue>Cervix carcinoma</tissue>
    </source>
</reference>
<reference key="9">
    <citation type="journal article" date="2008" name="Proteomics">
        <title>Large-scale phosphoproteome analysis of human liver tissue by enrichment and fractionation of phosphopeptides with strong anion exchange chromatography.</title>
        <authorList>
            <person name="Han G."/>
            <person name="Ye M."/>
            <person name="Zhou H."/>
            <person name="Jiang X."/>
            <person name="Feng S."/>
            <person name="Jiang X."/>
            <person name="Tian R."/>
            <person name="Wan D."/>
            <person name="Zou H."/>
            <person name="Gu J."/>
        </authorList>
    </citation>
    <scope>PHOSPHORYLATION [LARGE SCALE ANALYSIS] AT SER-658</scope>
    <scope>IDENTIFICATION BY MASS SPECTROMETRY [LARGE SCALE ANALYSIS]</scope>
    <source>
        <tissue>Liver</tissue>
    </source>
</reference>
<reference key="10">
    <citation type="journal article" date="2009" name="Anal. Chem.">
        <title>Lys-N and trypsin cover complementary parts of the phosphoproteome in a refined SCX-based approach.</title>
        <authorList>
            <person name="Gauci S."/>
            <person name="Helbig A.O."/>
            <person name="Slijper M."/>
            <person name="Krijgsveld J."/>
            <person name="Heck A.J."/>
            <person name="Mohammed S."/>
        </authorList>
    </citation>
    <scope>IDENTIFICATION BY MASS SPECTROMETRY [LARGE SCALE ANALYSIS]</scope>
</reference>
<reference key="11">
    <citation type="journal article" date="2009" name="Cell Stem Cell">
        <title>A genome-scale RNAi screen for Oct4 modulators defines a role of the Paf1 complex for embryonic stem cell identity.</title>
        <authorList>
            <person name="Ding L."/>
            <person name="Paszkowski-Rogacz M."/>
            <person name="Nitzsche A."/>
            <person name="Slabicki M.M."/>
            <person name="Heninger A.K."/>
            <person name="de Vries I."/>
            <person name="Kittler R."/>
            <person name="Junqueira M."/>
            <person name="Shevchenko A."/>
            <person name="Schulz H."/>
            <person name="Hubner N."/>
            <person name="Doss M.X."/>
            <person name="Sachinidis A."/>
            <person name="Hescheler J."/>
            <person name="Iacone R."/>
            <person name="Anastassiadis K."/>
            <person name="Stewart A.F."/>
            <person name="Pisabarro M.T."/>
            <person name="Caldarelli A."/>
            <person name="Poser I."/>
            <person name="Theis M."/>
            <person name="Buchholz F."/>
        </authorList>
    </citation>
    <scope>FUNCTION</scope>
</reference>
<reference key="12">
    <citation type="journal article" date="2009" name="Genes Dev.">
        <title>DSIF, the Paf1 complex, and Tat-SF1 have nonredundant, cooperative roles in RNA polymerase II elongation.</title>
        <authorList>
            <person name="Chen Y."/>
            <person name="Yamaguchi Y."/>
            <person name="Tsugeno Y."/>
            <person name="Yamamoto J."/>
            <person name="Yamada T."/>
            <person name="Nakamura M."/>
            <person name="Hisatake K."/>
            <person name="Handa H."/>
        </authorList>
    </citation>
    <scope>IDENTIFICATION IN THE PAF1 COMPLEX</scope>
    <scope>FUNCTION OF THE PAF1 COMPLEX</scope>
    <scope>INTERACTION WITH SUPT5H</scope>
</reference>
<reference key="13">
    <citation type="journal article" date="2009" name="Sci. Signal.">
        <title>Quantitative phosphoproteomic analysis of T cell receptor signaling reveals system-wide modulation of protein-protein interactions.</title>
        <authorList>
            <person name="Mayya V."/>
            <person name="Lundgren D.H."/>
            <person name="Hwang S.-I."/>
            <person name="Rezaul K."/>
            <person name="Wu L."/>
            <person name="Eng J.K."/>
            <person name="Rodionov V."/>
            <person name="Han D.K."/>
        </authorList>
    </citation>
    <scope>PHOSPHORYLATION [LARGE SCALE ANALYSIS] AT THR-629; SER-630 AND SER-658</scope>
    <scope>IDENTIFICATION BY MASS SPECTROMETRY [LARGE SCALE ANALYSIS]</scope>
    <source>
        <tissue>Leukemic T-cell</tissue>
    </source>
</reference>
<reference key="14">
    <citation type="journal article" date="2010" name="Cell">
        <title>The human PAF1 complex acts in chromatin transcription elongation both independently and cooperatively with SII/TFIIS.</title>
        <authorList>
            <person name="Kim J."/>
            <person name="Guermah M."/>
            <person name="Roeder R.G."/>
        </authorList>
    </citation>
    <scope>IDENTIFICATION IN THE PAF1 COMPLEX</scope>
    <scope>COMPOSITION OF THE PAF1 COMPLEX</scope>
    <scope>FUNCTION OF THE PAF1 COMPLEX</scope>
    <scope>INTERACTION WITH TCEA1</scope>
</reference>
<reference key="15">
    <citation type="journal article" date="2010" name="Sci. Signal.">
        <title>Quantitative phosphoproteomics reveals widespread full phosphorylation site occupancy during mitosis.</title>
        <authorList>
            <person name="Olsen J.V."/>
            <person name="Vermeulen M."/>
            <person name="Santamaria A."/>
            <person name="Kumar C."/>
            <person name="Miller M.L."/>
            <person name="Jensen L.J."/>
            <person name="Gnad F."/>
            <person name="Cox J."/>
            <person name="Jensen T.S."/>
            <person name="Nigg E.A."/>
            <person name="Brunak S."/>
            <person name="Mann M."/>
        </authorList>
    </citation>
    <scope>ACETYLATION [LARGE SCALE ANALYSIS] AT ALA-2</scope>
    <scope>PHOSPHORYLATION [LARGE SCALE ANALYSIS] AT SER-10; SER-14; SER-151; SER-154; SER-162; SER-171; SER-179; THR-188; SER-197; SER-212; SER-220; SER-229; SER-238; SER-279; SER-300; SER-630 AND SER-658</scope>
    <scope>CLEAVAGE OF INITIATOR METHIONINE [LARGE SCALE ANALYSIS]</scope>
    <scope>IDENTIFICATION BY MASS SPECTROMETRY [LARGE SCALE ANALYSIS]</scope>
    <source>
        <tissue>Cervix carcinoma</tissue>
    </source>
</reference>
<reference key="16">
    <citation type="journal article" date="2011" name="BMC Syst. Biol.">
        <title>Initial characterization of the human central proteome.</title>
        <authorList>
            <person name="Burkard T.R."/>
            <person name="Planyavsky M."/>
            <person name="Kaupe I."/>
            <person name="Breitwieser F.P."/>
            <person name="Buerckstuemmer T."/>
            <person name="Bennett K.L."/>
            <person name="Superti-Furga G."/>
            <person name="Colinge J."/>
        </authorList>
    </citation>
    <scope>IDENTIFICATION BY MASS SPECTROMETRY [LARGE SCALE ANALYSIS]</scope>
</reference>
<reference key="17">
    <citation type="journal article" date="2011" name="Sci. Signal.">
        <title>System-wide temporal characterization of the proteome and phosphoproteome of human embryonic stem cell differentiation.</title>
        <authorList>
            <person name="Rigbolt K.T."/>
            <person name="Prokhorova T.A."/>
            <person name="Akimov V."/>
            <person name="Henningsen J."/>
            <person name="Johansen P.T."/>
            <person name="Kratchmarova I."/>
            <person name="Kassem M."/>
            <person name="Mann M."/>
            <person name="Olsen J.V."/>
            <person name="Blagoev B."/>
        </authorList>
    </citation>
    <scope>ACETYLATION [LARGE SCALE ANALYSIS] AT ALA-2</scope>
    <scope>PHOSPHORYLATION [LARGE SCALE ANALYSIS] AT SER-14; SER-151; SER-154; SER-162; SER-171; SER-179; THR-188; SER-197; SER-212; SER-220; SER-279; SER-294; SER-300; SER-607; SER-608; SER-610; SER-630 AND SER-658</scope>
    <scope>CLEAVAGE OF INITIATOR METHIONINE [LARGE SCALE ANALYSIS]</scope>
    <scope>IDENTIFICATION BY MASS SPECTROMETRY [LARGE SCALE ANALYSIS]</scope>
</reference>
<reference key="18">
    <citation type="journal article" date="2012" name="Proc. Natl. Acad. Sci. U.S.A.">
        <title>N-terminal acetylome analyses and functional insights of the N-terminal acetyltransferase NatB.</title>
        <authorList>
            <person name="Van Damme P."/>
            <person name="Lasa M."/>
            <person name="Polevoda B."/>
            <person name="Gazquez C."/>
            <person name="Elosegui-Artola A."/>
            <person name="Kim D.S."/>
            <person name="De Juan-Pardo E."/>
            <person name="Demeyer K."/>
            <person name="Hole K."/>
            <person name="Larrea E."/>
            <person name="Timmerman E."/>
            <person name="Prieto J."/>
            <person name="Arnesen T."/>
            <person name="Sherman F."/>
            <person name="Gevaert K."/>
            <person name="Aldabe R."/>
        </authorList>
    </citation>
    <scope>ACETYLATION [LARGE SCALE ANALYSIS] AT ALA-2</scope>
    <scope>CLEAVAGE OF INITIATOR METHIONINE [LARGE SCALE ANALYSIS]</scope>
    <scope>IDENTIFICATION BY MASS SPECTROMETRY [LARGE SCALE ANALYSIS]</scope>
</reference>
<reference key="19">
    <citation type="journal article" date="2013" name="J. Proteome Res.">
        <title>Toward a comprehensive characterization of a human cancer cell phosphoproteome.</title>
        <authorList>
            <person name="Zhou H."/>
            <person name="Di Palma S."/>
            <person name="Preisinger C."/>
            <person name="Peng M."/>
            <person name="Polat A.N."/>
            <person name="Heck A.J."/>
            <person name="Mohammed S."/>
        </authorList>
    </citation>
    <scope>PHOSPHORYLATION [LARGE SCALE ANALYSIS] AT SER-66; THR-188; SER-197; SER-279; SER-630 AND SER-658</scope>
    <scope>IDENTIFICATION BY MASS SPECTROMETRY [LARGE SCALE ANALYSIS]</scope>
    <source>
        <tissue>Cervix carcinoma</tissue>
        <tissue>Erythroleukemia</tissue>
    </source>
</reference>
<reference key="20">
    <citation type="journal article" date="2014" name="J. Proteomics">
        <title>An enzyme assisted RP-RPLC approach for in-depth analysis of human liver phosphoproteome.</title>
        <authorList>
            <person name="Bian Y."/>
            <person name="Song C."/>
            <person name="Cheng K."/>
            <person name="Dong M."/>
            <person name="Wang F."/>
            <person name="Huang J."/>
            <person name="Sun D."/>
            <person name="Wang L."/>
            <person name="Ye M."/>
            <person name="Zou H."/>
        </authorList>
    </citation>
    <scope>PHOSPHORYLATION [LARGE SCALE ANALYSIS] AT SER-277; SER-279; SER-294; SER-296; SER-300; TYR-606; SER-610; SER-630 AND SER-658</scope>
    <scope>IDENTIFICATION BY MASS SPECTROMETRY [LARGE SCALE ANALYSIS]</scope>
    <source>
        <tissue>Liver</tissue>
    </source>
</reference>
<reference key="21">
    <citation type="journal article" date="2018" name="Cell">
        <title>Comparative Flavivirus-Host Protein Interaction Mapping Reveals Mechanisms of Dengue and Zika Virus Pathogenesis.</title>
        <authorList>
            <person name="Shah P.S."/>
            <person name="Link N."/>
            <person name="Jang G.M."/>
            <person name="Sharp P.P."/>
            <person name="Zhu T."/>
            <person name="Swaney D.L."/>
            <person name="Johnson J.R."/>
            <person name="Von Dollen J."/>
            <person name="Ramage H.R."/>
            <person name="Satkamp L."/>
            <person name="Newton B."/>
            <person name="Huettenhain R."/>
            <person name="Petit M.J."/>
            <person name="Baum T."/>
            <person name="Everitt A."/>
            <person name="Laufman O."/>
            <person name="Tassetto M."/>
            <person name="Shales M."/>
            <person name="Stevenson E."/>
            <person name="Iglesias G.N."/>
            <person name="Shokat L."/>
            <person name="Tripathi S."/>
            <person name="Balasubramaniam V."/>
            <person name="Webb L.G."/>
            <person name="Aguirre S."/>
            <person name="Willsey A.J."/>
            <person name="Garcia-Sastre A."/>
            <person name="Pollard K.S."/>
            <person name="Cherry S."/>
            <person name="Gamarnik A.V."/>
            <person name="Marazzi I."/>
            <person name="Taunton J."/>
            <person name="Fernandez-Sesma A."/>
            <person name="Bellen H.J."/>
            <person name="Andino R."/>
            <person name="Krogan N.J."/>
        </authorList>
    </citation>
    <scope>INTERACTION WITH ZIKA VIRUS FRENCH POLYNESIA 10087PF/2013 NS5; DENGUE VIRUS DENV2 16681 NS5 AND DENGUE VIRUS DENV4 DOMINICA/814669/1981 NS5</scope>
</reference>
<gene>
    <name type="primary">LEO1</name>
    <name type="synonym">RDL</name>
</gene>
<dbReference type="EMBL" id="AY302186">
    <property type="protein sequence ID" value="AAP68819.1"/>
    <property type="molecule type" value="mRNA"/>
</dbReference>
<dbReference type="EMBL" id="AK055762">
    <property type="protein sequence ID" value="BAB71006.1"/>
    <property type="status" value="ALT_FRAME"/>
    <property type="molecule type" value="mRNA"/>
</dbReference>
<dbReference type="EMBL" id="BC018147">
    <property type="protein sequence ID" value="AAH18147.1"/>
    <property type="molecule type" value="mRNA"/>
</dbReference>
<dbReference type="CCDS" id="CCDS10146.1">
    <molecule id="Q8WVC0-1"/>
</dbReference>
<dbReference type="CCDS" id="CCDS66767.1">
    <molecule id="Q8WVC0-2"/>
</dbReference>
<dbReference type="RefSeq" id="NP_001273359.1">
    <molecule id="Q8WVC0-2"/>
    <property type="nucleotide sequence ID" value="NM_001286430.2"/>
</dbReference>
<dbReference type="RefSeq" id="NP_620147.1">
    <molecule id="Q8WVC0-1"/>
    <property type="nucleotide sequence ID" value="NM_138792.4"/>
</dbReference>
<dbReference type="PDB" id="4M6T">
    <property type="method" value="X-ray"/>
    <property type="resolution" value="2.50 A"/>
    <property type="chains" value="A=370-462"/>
</dbReference>
<dbReference type="PDB" id="6GMH">
    <property type="method" value="EM"/>
    <property type="resolution" value="3.10 A"/>
    <property type="chains" value="U=1-666"/>
</dbReference>
<dbReference type="PDB" id="6TED">
    <property type="method" value="EM"/>
    <property type="resolution" value="3.10 A"/>
    <property type="chains" value="U=1-666"/>
</dbReference>
<dbReference type="PDB" id="7OOP">
    <property type="method" value="EM"/>
    <property type="resolution" value="2.90 A"/>
    <property type="chains" value="U=1-666"/>
</dbReference>
<dbReference type="PDB" id="7OPC">
    <property type="method" value="EM"/>
    <property type="resolution" value="3.00 A"/>
    <property type="chains" value="U=1-666"/>
</dbReference>
<dbReference type="PDB" id="7OPD">
    <property type="method" value="EM"/>
    <property type="resolution" value="3.00 A"/>
    <property type="chains" value="U=1-666"/>
</dbReference>
<dbReference type="PDB" id="7UNC">
    <property type="method" value="EM"/>
    <property type="resolution" value="3.00 A"/>
    <property type="chains" value="U=1-666"/>
</dbReference>
<dbReference type="PDB" id="7UND">
    <property type="method" value="EM"/>
    <property type="resolution" value="3.00 A"/>
    <property type="chains" value="U=1-666"/>
</dbReference>
<dbReference type="PDB" id="8A3Y">
    <property type="method" value="EM"/>
    <property type="resolution" value="3.30 A"/>
    <property type="chains" value="Q/U=1-666"/>
</dbReference>
<dbReference type="PDB" id="9EGX">
    <property type="method" value="EM"/>
    <property type="resolution" value="2.90 A"/>
    <property type="chains" value="U=1-666"/>
</dbReference>
<dbReference type="PDB" id="9EGY">
    <property type="method" value="EM"/>
    <property type="resolution" value="2.90 A"/>
    <property type="chains" value="U=1-666"/>
</dbReference>
<dbReference type="PDB" id="9EGZ">
    <property type="method" value="EM"/>
    <property type="resolution" value="2.90 A"/>
    <property type="chains" value="U=1-666"/>
</dbReference>
<dbReference type="PDB" id="9EH0">
    <property type="method" value="EM"/>
    <property type="resolution" value="3.60 A"/>
    <property type="chains" value="U=1-666"/>
</dbReference>
<dbReference type="PDB" id="9EH2">
    <property type="method" value="EM"/>
    <property type="resolution" value="3.10 A"/>
    <property type="chains" value="U=1-666"/>
</dbReference>
<dbReference type="PDBsum" id="4M6T"/>
<dbReference type="PDBsum" id="6GMH"/>
<dbReference type="PDBsum" id="6TED"/>
<dbReference type="PDBsum" id="7OOP"/>
<dbReference type="PDBsum" id="7OPC"/>
<dbReference type="PDBsum" id="7OPD"/>
<dbReference type="PDBsum" id="7UNC"/>
<dbReference type="PDBsum" id="7UND"/>
<dbReference type="PDBsum" id="8A3Y"/>
<dbReference type="PDBsum" id="9EGX"/>
<dbReference type="PDBsum" id="9EGY"/>
<dbReference type="PDBsum" id="9EGZ"/>
<dbReference type="PDBsum" id="9EH0"/>
<dbReference type="PDBsum" id="9EH2"/>
<dbReference type="EMDB" id="EMD-0031"/>
<dbReference type="EMDB" id="EMD-10480"/>
<dbReference type="EMDB" id="EMD-13010"/>
<dbReference type="EMDB" id="EMD-13015"/>
<dbReference type="EMDB" id="EMD-13016"/>
<dbReference type="EMDB" id="EMD-15127"/>
<dbReference type="EMDB" id="EMD-26620"/>
<dbReference type="EMDB" id="EMD-26621"/>
<dbReference type="EMDB" id="EMD-48039"/>
<dbReference type="EMDB" id="EMD-48040"/>
<dbReference type="EMDB" id="EMD-48041"/>
<dbReference type="EMDB" id="EMD-48042"/>
<dbReference type="EMDB" id="EMD-48043"/>
<dbReference type="EMDB" id="EMD-48044"/>
<dbReference type="SMR" id="Q8WVC0"/>
<dbReference type="BioGRID" id="125817">
    <property type="interactions" value="303"/>
</dbReference>
<dbReference type="ComplexPortal" id="CPX-2381">
    <property type="entry name" value="PAF1 complex"/>
</dbReference>
<dbReference type="CORUM" id="Q8WVC0"/>
<dbReference type="DIP" id="DIP-37885N"/>
<dbReference type="FunCoup" id="Q8WVC0">
    <property type="interactions" value="2280"/>
</dbReference>
<dbReference type="IntAct" id="Q8WVC0">
    <property type="interactions" value="77"/>
</dbReference>
<dbReference type="MINT" id="Q8WVC0"/>
<dbReference type="STRING" id="9606.ENSP00000299601"/>
<dbReference type="GlyGen" id="Q8WVC0">
    <property type="glycosylation" value="2 sites, 1 O-linked glycan (1 site)"/>
</dbReference>
<dbReference type="iPTMnet" id="Q8WVC0"/>
<dbReference type="PhosphoSitePlus" id="Q8WVC0"/>
<dbReference type="BioMuta" id="LEO1"/>
<dbReference type="DMDM" id="74751545"/>
<dbReference type="jPOST" id="Q8WVC0"/>
<dbReference type="MassIVE" id="Q8WVC0"/>
<dbReference type="PaxDb" id="9606-ENSP00000299601"/>
<dbReference type="PeptideAtlas" id="Q8WVC0"/>
<dbReference type="ProteomicsDB" id="74773">
    <molecule id="Q8WVC0-1"/>
</dbReference>
<dbReference type="ProteomicsDB" id="74774">
    <molecule id="Q8WVC0-2"/>
</dbReference>
<dbReference type="Pumba" id="Q8WVC0"/>
<dbReference type="Antibodypedia" id="24912">
    <property type="antibodies" value="359 antibodies from 31 providers"/>
</dbReference>
<dbReference type="DNASU" id="123169"/>
<dbReference type="Ensembl" id="ENST00000299601.10">
    <molecule id="Q8WVC0-1"/>
    <property type="protein sequence ID" value="ENSP00000299601.5"/>
    <property type="gene ID" value="ENSG00000166477.13"/>
</dbReference>
<dbReference type="Ensembl" id="ENST00000315141.5">
    <molecule id="Q8WVC0-2"/>
    <property type="protein sequence ID" value="ENSP00000314610.5"/>
    <property type="gene ID" value="ENSG00000166477.13"/>
</dbReference>
<dbReference type="GeneID" id="123169"/>
<dbReference type="KEGG" id="hsa:123169"/>
<dbReference type="MANE-Select" id="ENST00000299601.10">
    <property type="protein sequence ID" value="ENSP00000299601.5"/>
    <property type="RefSeq nucleotide sequence ID" value="NM_138792.4"/>
    <property type="RefSeq protein sequence ID" value="NP_620147.1"/>
</dbReference>
<dbReference type="UCSC" id="uc002abo.5">
    <molecule id="Q8WVC0-1"/>
    <property type="organism name" value="human"/>
</dbReference>
<dbReference type="AGR" id="HGNC:30401"/>
<dbReference type="CTD" id="123169"/>
<dbReference type="DisGeNET" id="123169"/>
<dbReference type="GeneCards" id="LEO1"/>
<dbReference type="HGNC" id="HGNC:30401">
    <property type="gene designation" value="LEO1"/>
</dbReference>
<dbReference type="HPA" id="ENSG00000166477">
    <property type="expression patterns" value="Low tissue specificity"/>
</dbReference>
<dbReference type="MIM" id="610507">
    <property type="type" value="gene"/>
</dbReference>
<dbReference type="neXtProt" id="NX_Q8WVC0"/>
<dbReference type="OpenTargets" id="ENSG00000166477"/>
<dbReference type="PharmGKB" id="PA142671558"/>
<dbReference type="VEuPathDB" id="HostDB:ENSG00000166477"/>
<dbReference type="eggNOG" id="KOG1181">
    <property type="taxonomic scope" value="Eukaryota"/>
</dbReference>
<dbReference type="eggNOG" id="KOG2428">
    <property type="taxonomic scope" value="Eukaryota"/>
</dbReference>
<dbReference type="GeneTree" id="ENSGT00550000074952"/>
<dbReference type="HOGENOM" id="CLU_021818_1_0_1"/>
<dbReference type="InParanoid" id="Q8WVC0"/>
<dbReference type="OMA" id="RSDRSMH"/>
<dbReference type="OrthoDB" id="20844at2759"/>
<dbReference type="PAN-GO" id="Q8WVC0">
    <property type="GO annotations" value="3 GO annotations based on evolutionary models"/>
</dbReference>
<dbReference type="PhylomeDB" id="Q8WVC0"/>
<dbReference type="TreeFam" id="TF321961"/>
<dbReference type="PathwayCommons" id="Q8WVC0"/>
<dbReference type="Reactome" id="R-HSA-112382">
    <property type="pathway name" value="Formation of RNA Pol II elongation complex"/>
</dbReference>
<dbReference type="Reactome" id="R-HSA-201722">
    <property type="pathway name" value="Formation of the beta-catenin:TCF transactivating complex"/>
</dbReference>
<dbReference type="Reactome" id="R-HSA-674695">
    <property type="pathway name" value="RNA Polymerase II Pre-transcription Events"/>
</dbReference>
<dbReference type="Reactome" id="R-HSA-75955">
    <property type="pathway name" value="RNA Polymerase II Transcription Elongation"/>
</dbReference>
<dbReference type="Reactome" id="R-HSA-8866654">
    <property type="pathway name" value="E3 ubiquitin ligases ubiquitinate target proteins"/>
</dbReference>
<dbReference type="SignaLink" id="Q8WVC0"/>
<dbReference type="SIGNOR" id="Q8WVC0"/>
<dbReference type="BioGRID-ORCS" id="123169">
    <property type="hits" value="112 hits in 1170 CRISPR screens"/>
</dbReference>
<dbReference type="ChiTaRS" id="LEO1">
    <property type="organism name" value="human"/>
</dbReference>
<dbReference type="EvolutionaryTrace" id="Q8WVC0"/>
<dbReference type="GeneWiki" id="LEO1"/>
<dbReference type="GenomeRNAi" id="123169"/>
<dbReference type="Pharos" id="Q8WVC0">
    <property type="development level" value="Tbio"/>
</dbReference>
<dbReference type="PRO" id="PR:Q8WVC0"/>
<dbReference type="Proteomes" id="UP000005640">
    <property type="component" value="Chromosome 15"/>
</dbReference>
<dbReference type="RNAct" id="Q8WVC0">
    <property type="molecule type" value="protein"/>
</dbReference>
<dbReference type="Bgee" id="ENSG00000166477">
    <property type="expression patterns" value="Expressed in tendon of biceps brachii and 168 other cell types or tissues"/>
</dbReference>
<dbReference type="GO" id="GO:0016593">
    <property type="term" value="C:Cdc73/Paf1 complex"/>
    <property type="evidence" value="ECO:0000314"/>
    <property type="project" value="UniProtKB"/>
</dbReference>
<dbReference type="GO" id="GO:0005813">
    <property type="term" value="C:centrosome"/>
    <property type="evidence" value="ECO:0000314"/>
    <property type="project" value="HPA"/>
</dbReference>
<dbReference type="GO" id="GO:0001650">
    <property type="term" value="C:fibrillar center"/>
    <property type="evidence" value="ECO:0000314"/>
    <property type="project" value="HPA"/>
</dbReference>
<dbReference type="GO" id="GO:0005654">
    <property type="term" value="C:nucleoplasm"/>
    <property type="evidence" value="ECO:0000314"/>
    <property type="project" value="HPA"/>
</dbReference>
<dbReference type="GO" id="GO:0005634">
    <property type="term" value="C:nucleus"/>
    <property type="evidence" value="ECO:0000318"/>
    <property type="project" value="GO_Central"/>
</dbReference>
<dbReference type="GO" id="GO:1990269">
    <property type="term" value="F:RNA polymerase II C-terminal domain phosphoserine binding"/>
    <property type="evidence" value="ECO:0000318"/>
    <property type="project" value="GO_Central"/>
</dbReference>
<dbReference type="GO" id="GO:0001711">
    <property type="term" value="P:endodermal cell fate commitment"/>
    <property type="evidence" value="ECO:0000250"/>
    <property type="project" value="UniProtKB"/>
</dbReference>
<dbReference type="GO" id="GO:0031124">
    <property type="term" value="P:mRNA 3'-end processing"/>
    <property type="evidence" value="ECO:0000315"/>
    <property type="project" value="UniProtKB"/>
</dbReference>
<dbReference type="GO" id="GO:0045638">
    <property type="term" value="P:negative regulation of myeloid cell differentiation"/>
    <property type="evidence" value="ECO:0000314"/>
    <property type="project" value="UniProtKB"/>
</dbReference>
<dbReference type="GO" id="GO:0045944">
    <property type="term" value="P:positive regulation of transcription by RNA polymerase II"/>
    <property type="evidence" value="ECO:0000314"/>
    <property type="project" value="UniProtKB"/>
</dbReference>
<dbReference type="GO" id="GO:0032968">
    <property type="term" value="P:positive regulation of transcription elongation by RNA polymerase II"/>
    <property type="evidence" value="ECO:0000318"/>
    <property type="project" value="GO_Central"/>
</dbReference>
<dbReference type="GO" id="GO:0019827">
    <property type="term" value="P:stem cell population maintenance"/>
    <property type="evidence" value="ECO:0000314"/>
    <property type="project" value="UniProtKB"/>
</dbReference>
<dbReference type="GO" id="GO:0006368">
    <property type="term" value="P:transcription elongation by RNA polymerase II"/>
    <property type="evidence" value="ECO:0000314"/>
    <property type="project" value="GO_Central"/>
</dbReference>
<dbReference type="GO" id="GO:0016055">
    <property type="term" value="P:Wnt signaling pathway"/>
    <property type="evidence" value="ECO:0007669"/>
    <property type="project" value="UniProtKB-KW"/>
</dbReference>
<dbReference type="InterPro" id="IPR007149">
    <property type="entry name" value="Leo1"/>
</dbReference>
<dbReference type="PANTHER" id="PTHR23146">
    <property type="entry name" value="LEO1 PROTEIN"/>
    <property type="match status" value="1"/>
</dbReference>
<dbReference type="PANTHER" id="PTHR23146:SF0">
    <property type="entry name" value="RNA POLYMERASE-ASSOCIATED PROTEIN LEO1"/>
    <property type="match status" value="1"/>
</dbReference>
<dbReference type="Pfam" id="PF04004">
    <property type="entry name" value="Leo1"/>
    <property type="match status" value="1"/>
</dbReference>
<organism>
    <name type="scientific">Homo sapiens</name>
    <name type="common">Human</name>
    <dbReference type="NCBI Taxonomy" id="9606"/>
    <lineage>
        <taxon>Eukaryota</taxon>
        <taxon>Metazoa</taxon>
        <taxon>Chordata</taxon>
        <taxon>Craniata</taxon>
        <taxon>Vertebrata</taxon>
        <taxon>Euteleostomi</taxon>
        <taxon>Mammalia</taxon>
        <taxon>Eutheria</taxon>
        <taxon>Euarchontoglires</taxon>
        <taxon>Primates</taxon>
        <taxon>Haplorrhini</taxon>
        <taxon>Catarrhini</taxon>
        <taxon>Hominidae</taxon>
        <taxon>Homo</taxon>
    </lineage>
</organism>